<protein>
    <recommendedName>
        <fullName evidence="1">DNA-directed RNA polymerase subunit alpha</fullName>
        <shortName evidence="1">PEP</shortName>
        <ecNumber evidence="1">2.7.7.6</ecNumber>
    </recommendedName>
    <alternativeName>
        <fullName evidence="1">Plastid-encoded RNA polymerase subunit alpha</fullName>
        <shortName evidence="1">RNA polymerase subunit alpha</shortName>
    </alternativeName>
</protein>
<accession>P92392</accession>
<accession>A1E9M2</accession>
<proteinExistence type="inferred from homology"/>
<organism>
    <name type="scientific">Hordeum vulgare</name>
    <name type="common">Barley</name>
    <dbReference type="NCBI Taxonomy" id="4513"/>
    <lineage>
        <taxon>Eukaryota</taxon>
        <taxon>Viridiplantae</taxon>
        <taxon>Streptophyta</taxon>
        <taxon>Embryophyta</taxon>
        <taxon>Tracheophyta</taxon>
        <taxon>Spermatophyta</taxon>
        <taxon>Magnoliopsida</taxon>
        <taxon>Liliopsida</taxon>
        <taxon>Poales</taxon>
        <taxon>Poaceae</taxon>
        <taxon>BOP clade</taxon>
        <taxon>Pooideae</taxon>
        <taxon>Triticodae</taxon>
        <taxon>Triticeae</taxon>
        <taxon>Hordeinae</taxon>
        <taxon>Hordeum</taxon>
    </lineage>
</organism>
<sequence>MVREEVAGSTQTLQWKCVESRVDSKRLYYGRFILSPLRKGQADTVGIALRRALLGEIEGTCITRAKFGSVPHEYSTIAGIEESVQEILLNLKEIVLRSNLYGVRDASICVKGPRYITAQDIILPPSVETVDTAQPIANLTEPIDFCIDLQIKRDRGYQTELRKNYQDGSYPIDAVSMPVRNVNYSIFSCGNGNEKHEILFLEIWTNGSLTPKEALYEASRNLIDLFLPFLHAEEEGTSFEENKNRFTPPLFTFQKRLTNLKKNKKGIPLNCIFIDQLELTSRTYNCLKRANIHTLLDLLSKTEEDLMRIDSFRMEDRKHIWDTLEKHLPIDLLKNKLSF</sequence>
<geneLocation type="chloroplast"/>
<reference key="1">
    <citation type="journal article" date="1997" name="Mol. Phylogenet. Evol.">
        <title>Phylogenetic analysis of the Triticeae (Poaceae) based on rpoA sequence data.</title>
        <authorList>
            <person name="Petersen G."/>
            <person name="Seberg O."/>
        </authorList>
    </citation>
    <scope>NUCLEOTIDE SEQUENCE [GENOMIC DNA]</scope>
    <source>
        <strain>H3139</strain>
        <tissue>Leaf</tissue>
    </source>
</reference>
<reference key="2">
    <citation type="journal article" date="2007" name="Theor. Appl. Genet.">
        <title>Complete chloroplast genome sequences of Hordeum vulgare, Sorghum bicolor and Agrostis stolonifera, and comparative analyses with other grass genomes.</title>
        <authorList>
            <person name="Saski C."/>
            <person name="Lee S.-B."/>
            <person name="Fjellheim S."/>
            <person name="Guda C."/>
            <person name="Jansen R.K."/>
            <person name="Luo H."/>
            <person name="Tomkins J."/>
            <person name="Rognli O.A."/>
            <person name="Daniell H."/>
            <person name="Clarke J.L."/>
        </authorList>
    </citation>
    <scope>NUCLEOTIDE SEQUENCE [LARGE SCALE GENOMIC DNA]</scope>
    <source>
        <strain>cv. Morex</strain>
    </source>
</reference>
<keyword id="KW-0150">Chloroplast</keyword>
<keyword id="KW-0240">DNA-directed RNA polymerase</keyword>
<keyword id="KW-0548">Nucleotidyltransferase</keyword>
<keyword id="KW-0934">Plastid</keyword>
<keyword id="KW-0804">Transcription</keyword>
<keyword id="KW-0808">Transferase</keyword>
<dbReference type="EC" id="2.7.7.6" evidence="1"/>
<dbReference type="EMBL" id="Z77764">
    <property type="protein sequence ID" value="CAB01369.1"/>
    <property type="molecule type" value="Genomic_DNA"/>
</dbReference>
<dbReference type="EMBL" id="EF115541">
    <property type="protein sequence ID" value="ABK79443.1"/>
    <property type="molecule type" value="Genomic_DNA"/>
</dbReference>
<dbReference type="RefSeq" id="YP_010144456.1">
    <property type="nucleotide sequence ID" value="NC_056985.1"/>
</dbReference>
<dbReference type="RefSeq" id="YP_874684.1">
    <property type="nucleotide sequence ID" value="NC_008590.1"/>
</dbReference>
<dbReference type="SMR" id="P92392"/>
<dbReference type="GeneID" id="4525081"/>
<dbReference type="GeneID" id="67140642"/>
<dbReference type="GO" id="GO:0009507">
    <property type="term" value="C:chloroplast"/>
    <property type="evidence" value="ECO:0007669"/>
    <property type="project" value="UniProtKB-SubCell"/>
</dbReference>
<dbReference type="GO" id="GO:0000428">
    <property type="term" value="C:DNA-directed RNA polymerase complex"/>
    <property type="evidence" value="ECO:0007669"/>
    <property type="project" value="UniProtKB-KW"/>
</dbReference>
<dbReference type="GO" id="GO:0005739">
    <property type="term" value="C:mitochondrion"/>
    <property type="evidence" value="ECO:0007669"/>
    <property type="project" value="GOC"/>
</dbReference>
<dbReference type="GO" id="GO:0003677">
    <property type="term" value="F:DNA binding"/>
    <property type="evidence" value="ECO:0007669"/>
    <property type="project" value="UniProtKB-UniRule"/>
</dbReference>
<dbReference type="GO" id="GO:0003899">
    <property type="term" value="F:DNA-directed RNA polymerase activity"/>
    <property type="evidence" value="ECO:0007669"/>
    <property type="project" value="UniProtKB-UniRule"/>
</dbReference>
<dbReference type="GO" id="GO:0046983">
    <property type="term" value="F:protein dimerization activity"/>
    <property type="evidence" value="ECO:0007669"/>
    <property type="project" value="InterPro"/>
</dbReference>
<dbReference type="GO" id="GO:0006351">
    <property type="term" value="P:DNA-templated transcription"/>
    <property type="evidence" value="ECO:0007669"/>
    <property type="project" value="UniProtKB-UniRule"/>
</dbReference>
<dbReference type="CDD" id="cd06928">
    <property type="entry name" value="RNAP_alpha_NTD"/>
    <property type="match status" value="1"/>
</dbReference>
<dbReference type="FunFam" id="1.10.150.20:FF:000021">
    <property type="entry name" value="DNA-directed RNA polymerase subunit alpha"/>
    <property type="match status" value="1"/>
</dbReference>
<dbReference type="FunFam" id="2.170.120.12:FF:000001">
    <property type="entry name" value="DNA-directed RNA polymerase subunit alpha"/>
    <property type="match status" value="1"/>
</dbReference>
<dbReference type="Gene3D" id="1.10.150.20">
    <property type="entry name" value="5' to 3' exonuclease, C-terminal subdomain"/>
    <property type="match status" value="1"/>
</dbReference>
<dbReference type="Gene3D" id="2.170.120.12">
    <property type="entry name" value="DNA-directed RNA polymerase, insert domain"/>
    <property type="match status" value="1"/>
</dbReference>
<dbReference type="Gene3D" id="3.30.1360.10">
    <property type="entry name" value="RNA polymerase, RBP11-like subunit"/>
    <property type="match status" value="1"/>
</dbReference>
<dbReference type="HAMAP" id="MF_00059">
    <property type="entry name" value="RNApol_bact_RpoA"/>
    <property type="match status" value="1"/>
</dbReference>
<dbReference type="InterPro" id="IPR011262">
    <property type="entry name" value="DNA-dir_RNA_pol_insert"/>
</dbReference>
<dbReference type="InterPro" id="IPR011263">
    <property type="entry name" value="DNA-dir_RNA_pol_RpoA/D/Rpb3"/>
</dbReference>
<dbReference type="InterPro" id="IPR011773">
    <property type="entry name" value="DNA-dir_RpoA"/>
</dbReference>
<dbReference type="InterPro" id="IPR036603">
    <property type="entry name" value="RBP11-like"/>
</dbReference>
<dbReference type="InterPro" id="IPR011260">
    <property type="entry name" value="RNAP_asu_C"/>
</dbReference>
<dbReference type="InterPro" id="IPR036643">
    <property type="entry name" value="RNApol_insert_sf"/>
</dbReference>
<dbReference type="NCBIfam" id="TIGR02027">
    <property type="entry name" value="rpoA"/>
    <property type="match status" value="1"/>
</dbReference>
<dbReference type="Pfam" id="PF01000">
    <property type="entry name" value="RNA_pol_A_bac"/>
    <property type="match status" value="1"/>
</dbReference>
<dbReference type="Pfam" id="PF03118">
    <property type="entry name" value="RNA_pol_A_CTD"/>
    <property type="match status" value="1"/>
</dbReference>
<dbReference type="Pfam" id="PF01193">
    <property type="entry name" value="RNA_pol_L"/>
    <property type="match status" value="1"/>
</dbReference>
<dbReference type="SMART" id="SM00662">
    <property type="entry name" value="RPOLD"/>
    <property type="match status" value="1"/>
</dbReference>
<dbReference type="SUPFAM" id="SSF47789">
    <property type="entry name" value="C-terminal domain of RNA polymerase alpha subunit"/>
    <property type="match status" value="1"/>
</dbReference>
<dbReference type="SUPFAM" id="SSF56553">
    <property type="entry name" value="Insert subdomain of RNA polymerase alpha subunit"/>
    <property type="match status" value="1"/>
</dbReference>
<dbReference type="SUPFAM" id="SSF55257">
    <property type="entry name" value="RBP11-like subunits of RNA polymerase"/>
    <property type="match status" value="1"/>
</dbReference>
<feature type="chain" id="PRO_0000175464" description="DNA-directed RNA polymerase subunit alpha">
    <location>
        <begin position="1"/>
        <end position="339"/>
    </location>
</feature>
<feature type="region of interest" description="Alpha N-terminal domain (alpha-NTD)" evidence="1">
    <location>
        <begin position="1"/>
        <end position="233"/>
    </location>
</feature>
<feature type="region of interest" description="Alpha C-terminal domain (alpha-CTD)" evidence="1">
    <location>
        <begin position="264"/>
        <end position="339"/>
    </location>
</feature>
<comment type="function">
    <text evidence="1">DNA-dependent RNA polymerase catalyzes the transcription of DNA into RNA using the four ribonucleoside triphosphates as substrates.</text>
</comment>
<comment type="catalytic activity">
    <reaction evidence="1">
        <text>RNA(n) + a ribonucleoside 5'-triphosphate = RNA(n+1) + diphosphate</text>
        <dbReference type="Rhea" id="RHEA:21248"/>
        <dbReference type="Rhea" id="RHEA-COMP:14527"/>
        <dbReference type="Rhea" id="RHEA-COMP:17342"/>
        <dbReference type="ChEBI" id="CHEBI:33019"/>
        <dbReference type="ChEBI" id="CHEBI:61557"/>
        <dbReference type="ChEBI" id="CHEBI:140395"/>
        <dbReference type="EC" id="2.7.7.6"/>
    </reaction>
</comment>
<comment type="subunit">
    <text evidence="1">In plastids the minimal PEP RNA polymerase catalytic core is composed of four subunits: alpha, beta, beta', and beta''. When a (nuclear-encoded) sigma factor is associated with the core the holoenzyme is formed, which can initiate transcription.</text>
</comment>
<comment type="subcellular location">
    <subcellularLocation>
        <location>Plastid</location>
        <location>Chloroplast</location>
    </subcellularLocation>
</comment>
<comment type="domain">
    <text evidence="1">The N-terminal domain is essential for RNAP assembly and basal transcription, whereas the C-terminal domain is involved in interaction with transcriptional regulators and with upstream promoter elements.</text>
</comment>
<comment type="similarity">
    <text evidence="1">Belongs to the RNA polymerase alpha chain family.</text>
</comment>
<name>RPOA_HORVU</name>
<gene>
    <name evidence="1" type="primary">rpoA</name>
</gene>
<evidence type="ECO:0000255" key="1">
    <source>
        <dbReference type="HAMAP-Rule" id="MF_00059"/>
    </source>
</evidence>